<evidence type="ECO:0000255" key="1">
    <source>
        <dbReference type="HAMAP-Rule" id="MF_01864"/>
    </source>
</evidence>
<evidence type="ECO:0000255" key="2">
    <source>
        <dbReference type="PROSITE-ProRule" id="PRU01266"/>
    </source>
</evidence>
<organism>
    <name type="scientific">Prochlorococcus marinus subsp. pastoris (strain CCMP1986 / NIES-2087 / MED4)</name>
    <dbReference type="NCBI Taxonomy" id="59919"/>
    <lineage>
        <taxon>Bacteria</taxon>
        <taxon>Bacillati</taxon>
        <taxon>Cyanobacteriota</taxon>
        <taxon>Cyanophyceae</taxon>
        <taxon>Synechococcales</taxon>
        <taxon>Prochlorococcaceae</taxon>
        <taxon>Prochlorococcus</taxon>
    </lineage>
</organism>
<feature type="chain" id="PRO_0000374454" description="tRNA-2-methylthio-N(6)-dimethylallyladenosine synthase">
    <location>
        <begin position="1"/>
        <end position="464"/>
    </location>
</feature>
<feature type="domain" description="MTTase N-terminal" evidence="1">
    <location>
        <begin position="19"/>
        <end position="135"/>
    </location>
</feature>
<feature type="domain" description="Radical SAM core" evidence="2">
    <location>
        <begin position="156"/>
        <end position="393"/>
    </location>
</feature>
<feature type="domain" description="TRAM" evidence="1">
    <location>
        <begin position="396"/>
        <end position="464"/>
    </location>
</feature>
<feature type="binding site" evidence="1">
    <location>
        <position position="28"/>
    </location>
    <ligand>
        <name>[4Fe-4S] cluster</name>
        <dbReference type="ChEBI" id="CHEBI:49883"/>
        <label>1</label>
    </ligand>
</feature>
<feature type="binding site" evidence="1">
    <location>
        <position position="64"/>
    </location>
    <ligand>
        <name>[4Fe-4S] cluster</name>
        <dbReference type="ChEBI" id="CHEBI:49883"/>
        <label>1</label>
    </ligand>
</feature>
<feature type="binding site" evidence="1">
    <location>
        <position position="98"/>
    </location>
    <ligand>
        <name>[4Fe-4S] cluster</name>
        <dbReference type="ChEBI" id="CHEBI:49883"/>
        <label>1</label>
    </ligand>
</feature>
<feature type="binding site" evidence="1">
    <location>
        <position position="170"/>
    </location>
    <ligand>
        <name>[4Fe-4S] cluster</name>
        <dbReference type="ChEBI" id="CHEBI:49883"/>
        <label>2</label>
        <note>4Fe-4S-S-AdoMet</note>
    </ligand>
</feature>
<feature type="binding site" evidence="1">
    <location>
        <position position="174"/>
    </location>
    <ligand>
        <name>[4Fe-4S] cluster</name>
        <dbReference type="ChEBI" id="CHEBI:49883"/>
        <label>2</label>
        <note>4Fe-4S-S-AdoMet</note>
    </ligand>
</feature>
<feature type="binding site" evidence="1">
    <location>
        <position position="177"/>
    </location>
    <ligand>
        <name>[4Fe-4S] cluster</name>
        <dbReference type="ChEBI" id="CHEBI:49883"/>
        <label>2</label>
        <note>4Fe-4S-S-AdoMet</note>
    </ligand>
</feature>
<accession>Q7V0F7</accession>
<sequence length="464" mass="53196">MLTKPIQEEEKIYKNSSLGSYWITTFGCQMNKADSERMAGTLEKMGYSRAIDELKADLVLYNTCTIRDSAQQKVYSFLGKQVKRKHSTPKLKLVVAGCLAQQEGESLLRRVPELDLIMGPQHVNNLENLLERVDLGNQVVATEETFISEDITNPRRDSSICGWVNIIYGCNERCSYCVVPSVRGKEQSRYPDAIKSEIESLAHNNFKEVTLLGQNIDAYGRDLPGTTKEGRKENSLTDLLYFIHDVEGIKRIRFSTSHPKYFSKRLINACYELDKVCEHFHIPFQSGNNEILRLMARGYTIEKYKRIIENIRQLMPNASITADAIVAFPGETETQYRETLKLISDIGFDQVMTAAYSPRPNTPAAFWDNQIPEEVKKERLKEINELVETTSRKRNQRYLNNIESVLIEGLNPKNNAQMMGRTRTNRLTFVEISKNIEFNYSYGDEINVKITEARSFSLSGQIYK</sequence>
<protein>
    <recommendedName>
        <fullName evidence="1">tRNA-2-methylthio-N(6)-dimethylallyladenosine synthase</fullName>
        <ecNumber evidence="1">2.8.4.3</ecNumber>
    </recommendedName>
    <alternativeName>
        <fullName evidence="1">(Dimethylallyl)adenosine tRNA methylthiotransferase MiaB</fullName>
    </alternativeName>
    <alternativeName>
        <fullName evidence="1">tRNA-i(6)A37 methylthiotransferase</fullName>
    </alternativeName>
</protein>
<gene>
    <name evidence="1" type="primary">miaB</name>
    <name type="ordered locus">PMM1305</name>
</gene>
<reference key="1">
    <citation type="journal article" date="2003" name="Nature">
        <title>Genome divergence in two Prochlorococcus ecotypes reflects oceanic niche differentiation.</title>
        <authorList>
            <person name="Rocap G."/>
            <person name="Larimer F.W."/>
            <person name="Lamerdin J.E."/>
            <person name="Malfatti S."/>
            <person name="Chain P."/>
            <person name="Ahlgren N.A."/>
            <person name="Arellano A."/>
            <person name="Coleman M."/>
            <person name="Hauser L."/>
            <person name="Hess W.R."/>
            <person name="Johnson Z.I."/>
            <person name="Land M.L."/>
            <person name="Lindell D."/>
            <person name="Post A.F."/>
            <person name="Regala W."/>
            <person name="Shah M."/>
            <person name="Shaw S.L."/>
            <person name="Steglich C."/>
            <person name="Sullivan M.B."/>
            <person name="Ting C.S."/>
            <person name="Tolonen A."/>
            <person name="Webb E.A."/>
            <person name="Zinser E.R."/>
            <person name="Chisholm S.W."/>
        </authorList>
    </citation>
    <scope>NUCLEOTIDE SEQUENCE [LARGE SCALE GENOMIC DNA]</scope>
    <source>
        <strain>CCMP1986 / NIES-2087 / MED4</strain>
    </source>
</reference>
<proteinExistence type="inferred from homology"/>
<name>MIAB_PROMP</name>
<comment type="function">
    <text evidence="1">Catalyzes the methylthiolation of N6-(dimethylallyl)adenosine (i(6)A), leading to the formation of 2-methylthio-N6-(dimethylallyl)adenosine (ms(2)i(6)A) at position 37 in tRNAs that read codons beginning with uridine.</text>
</comment>
<comment type="catalytic activity">
    <reaction evidence="1">
        <text>N(6)-dimethylallyladenosine(37) in tRNA + (sulfur carrier)-SH + AH2 + 2 S-adenosyl-L-methionine = 2-methylsulfanyl-N(6)-dimethylallyladenosine(37) in tRNA + (sulfur carrier)-H + 5'-deoxyadenosine + L-methionine + A + S-adenosyl-L-homocysteine + 2 H(+)</text>
        <dbReference type="Rhea" id="RHEA:37067"/>
        <dbReference type="Rhea" id="RHEA-COMP:10375"/>
        <dbReference type="Rhea" id="RHEA-COMP:10376"/>
        <dbReference type="Rhea" id="RHEA-COMP:14737"/>
        <dbReference type="Rhea" id="RHEA-COMP:14739"/>
        <dbReference type="ChEBI" id="CHEBI:13193"/>
        <dbReference type="ChEBI" id="CHEBI:15378"/>
        <dbReference type="ChEBI" id="CHEBI:17319"/>
        <dbReference type="ChEBI" id="CHEBI:17499"/>
        <dbReference type="ChEBI" id="CHEBI:29917"/>
        <dbReference type="ChEBI" id="CHEBI:57844"/>
        <dbReference type="ChEBI" id="CHEBI:57856"/>
        <dbReference type="ChEBI" id="CHEBI:59789"/>
        <dbReference type="ChEBI" id="CHEBI:64428"/>
        <dbReference type="ChEBI" id="CHEBI:74415"/>
        <dbReference type="ChEBI" id="CHEBI:74417"/>
        <dbReference type="EC" id="2.8.4.3"/>
    </reaction>
</comment>
<comment type="cofactor">
    <cofactor evidence="1">
        <name>[4Fe-4S] cluster</name>
        <dbReference type="ChEBI" id="CHEBI:49883"/>
    </cofactor>
    <text evidence="1">Binds 2 [4Fe-4S] clusters. One cluster is coordinated with 3 cysteines and an exchangeable S-adenosyl-L-methionine.</text>
</comment>
<comment type="subunit">
    <text evidence="1">Monomer.</text>
</comment>
<comment type="subcellular location">
    <subcellularLocation>
        <location evidence="1">Cytoplasm</location>
    </subcellularLocation>
</comment>
<comment type="similarity">
    <text evidence="1">Belongs to the methylthiotransferase family. MiaB subfamily.</text>
</comment>
<keyword id="KW-0004">4Fe-4S</keyword>
<keyword id="KW-0963">Cytoplasm</keyword>
<keyword id="KW-0408">Iron</keyword>
<keyword id="KW-0411">Iron-sulfur</keyword>
<keyword id="KW-0479">Metal-binding</keyword>
<keyword id="KW-0949">S-adenosyl-L-methionine</keyword>
<keyword id="KW-0808">Transferase</keyword>
<keyword id="KW-0819">tRNA processing</keyword>
<dbReference type="EC" id="2.8.4.3" evidence="1"/>
<dbReference type="EMBL" id="BX548174">
    <property type="protein sequence ID" value="CAE19764.1"/>
    <property type="molecule type" value="Genomic_DNA"/>
</dbReference>
<dbReference type="RefSeq" id="WP_011132939.1">
    <property type="nucleotide sequence ID" value="NC_005072.1"/>
</dbReference>
<dbReference type="SMR" id="Q7V0F7"/>
<dbReference type="STRING" id="59919.PMM1305"/>
<dbReference type="KEGG" id="pmm:PMM1305"/>
<dbReference type="eggNOG" id="COG0621">
    <property type="taxonomic scope" value="Bacteria"/>
</dbReference>
<dbReference type="HOGENOM" id="CLU_018697_2_2_3"/>
<dbReference type="OrthoDB" id="9805215at2"/>
<dbReference type="Proteomes" id="UP000001026">
    <property type="component" value="Chromosome"/>
</dbReference>
<dbReference type="GO" id="GO:0005737">
    <property type="term" value="C:cytoplasm"/>
    <property type="evidence" value="ECO:0007669"/>
    <property type="project" value="UniProtKB-SubCell"/>
</dbReference>
<dbReference type="GO" id="GO:0051539">
    <property type="term" value="F:4 iron, 4 sulfur cluster binding"/>
    <property type="evidence" value="ECO:0007669"/>
    <property type="project" value="UniProtKB-UniRule"/>
</dbReference>
<dbReference type="GO" id="GO:0046872">
    <property type="term" value="F:metal ion binding"/>
    <property type="evidence" value="ECO:0007669"/>
    <property type="project" value="UniProtKB-KW"/>
</dbReference>
<dbReference type="GO" id="GO:0035596">
    <property type="term" value="F:methylthiotransferase activity"/>
    <property type="evidence" value="ECO:0007669"/>
    <property type="project" value="InterPro"/>
</dbReference>
<dbReference type="GO" id="GO:0035600">
    <property type="term" value="P:tRNA methylthiolation"/>
    <property type="evidence" value="ECO:0007669"/>
    <property type="project" value="TreeGrafter"/>
</dbReference>
<dbReference type="CDD" id="cd01335">
    <property type="entry name" value="Radical_SAM"/>
    <property type="match status" value="1"/>
</dbReference>
<dbReference type="FunFam" id="3.40.50.12160:FF:000003">
    <property type="entry name" value="CDK5 regulatory subunit-associated protein 1"/>
    <property type="match status" value="1"/>
</dbReference>
<dbReference type="FunFam" id="3.80.30.20:FF:000001">
    <property type="entry name" value="tRNA-2-methylthio-N(6)-dimethylallyladenosine synthase 2"/>
    <property type="match status" value="1"/>
</dbReference>
<dbReference type="Gene3D" id="3.40.50.12160">
    <property type="entry name" value="Methylthiotransferase, N-terminal domain"/>
    <property type="match status" value="1"/>
</dbReference>
<dbReference type="Gene3D" id="3.80.30.20">
    <property type="entry name" value="tm_1862 like domain"/>
    <property type="match status" value="1"/>
</dbReference>
<dbReference type="HAMAP" id="MF_01864">
    <property type="entry name" value="tRNA_metthiotr_MiaB"/>
    <property type="match status" value="1"/>
</dbReference>
<dbReference type="InterPro" id="IPR006638">
    <property type="entry name" value="Elp3/MiaA/NifB-like_rSAM"/>
</dbReference>
<dbReference type="InterPro" id="IPR005839">
    <property type="entry name" value="Methylthiotransferase"/>
</dbReference>
<dbReference type="InterPro" id="IPR020612">
    <property type="entry name" value="Methylthiotransferase_CS"/>
</dbReference>
<dbReference type="InterPro" id="IPR013848">
    <property type="entry name" value="Methylthiotransferase_N"/>
</dbReference>
<dbReference type="InterPro" id="IPR038135">
    <property type="entry name" value="Methylthiotransferase_N_sf"/>
</dbReference>
<dbReference type="InterPro" id="IPR006463">
    <property type="entry name" value="MiaB_methiolase"/>
</dbReference>
<dbReference type="InterPro" id="IPR007197">
    <property type="entry name" value="rSAM"/>
</dbReference>
<dbReference type="InterPro" id="IPR023404">
    <property type="entry name" value="rSAM_horseshoe"/>
</dbReference>
<dbReference type="InterPro" id="IPR002792">
    <property type="entry name" value="TRAM_dom"/>
</dbReference>
<dbReference type="NCBIfam" id="TIGR01574">
    <property type="entry name" value="miaB-methiolase"/>
    <property type="match status" value="1"/>
</dbReference>
<dbReference type="NCBIfam" id="TIGR00089">
    <property type="entry name" value="MiaB/RimO family radical SAM methylthiotransferase"/>
    <property type="match status" value="1"/>
</dbReference>
<dbReference type="PANTHER" id="PTHR43020">
    <property type="entry name" value="CDK5 REGULATORY SUBUNIT-ASSOCIATED PROTEIN 1"/>
    <property type="match status" value="1"/>
</dbReference>
<dbReference type="PANTHER" id="PTHR43020:SF2">
    <property type="entry name" value="MITOCHONDRIAL TRNA METHYLTHIOTRANSFERASE CDK5RAP1"/>
    <property type="match status" value="1"/>
</dbReference>
<dbReference type="Pfam" id="PF04055">
    <property type="entry name" value="Radical_SAM"/>
    <property type="match status" value="1"/>
</dbReference>
<dbReference type="Pfam" id="PF01938">
    <property type="entry name" value="TRAM"/>
    <property type="match status" value="1"/>
</dbReference>
<dbReference type="Pfam" id="PF00919">
    <property type="entry name" value="UPF0004"/>
    <property type="match status" value="1"/>
</dbReference>
<dbReference type="SFLD" id="SFLDF00273">
    <property type="entry name" value="(dimethylallyl)adenosine_tRNA"/>
    <property type="match status" value="1"/>
</dbReference>
<dbReference type="SFLD" id="SFLDG01082">
    <property type="entry name" value="B12-binding_domain_containing"/>
    <property type="match status" value="1"/>
</dbReference>
<dbReference type="SFLD" id="SFLDS00029">
    <property type="entry name" value="Radical_SAM"/>
    <property type="match status" value="1"/>
</dbReference>
<dbReference type="SMART" id="SM00729">
    <property type="entry name" value="Elp3"/>
    <property type="match status" value="1"/>
</dbReference>
<dbReference type="SUPFAM" id="SSF102114">
    <property type="entry name" value="Radical SAM enzymes"/>
    <property type="match status" value="1"/>
</dbReference>
<dbReference type="PROSITE" id="PS51449">
    <property type="entry name" value="MTTASE_N"/>
    <property type="match status" value="1"/>
</dbReference>
<dbReference type="PROSITE" id="PS01278">
    <property type="entry name" value="MTTASE_RADICAL"/>
    <property type="match status" value="1"/>
</dbReference>
<dbReference type="PROSITE" id="PS51918">
    <property type="entry name" value="RADICAL_SAM"/>
    <property type="match status" value="1"/>
</dbReference>
<dbReference type="PROSITE" id="PS50926">
    <property type="entry name" value="TRAM"/>
    <property type="match status" value="1"/>
</dbReference>